<dbReference type="EC" id="2.7.7.6" evidence="1"/>
<dbReference type="EMBL" id="CP000388">
    <property type="protein sequence ID" value="ABG39540.1"/>
    <property type="molecule type" value="Genomic_DNA"/>
</dbReference>
<dbReference type="RefSeq" id="WP_006990558.1">
    <property type="nucleotide sequence ID" value="NC_008228.1"/>
</dbReference>
<dbReference type="SMR" id="Q15X48"/>
<dbReference type="STRING" id="342610.Patl_1014"/>
<dbReference type="KEGG" id="pat:Patl_1014"/>
<dbReference type="eggNOG" id="COG0202">
    <property type="taxonomic scope" value="Bacteria"/>
</dbReference>
<dbReference type="HOGENOM" id="CLU_053084_0_0_6"/>
<dbReference type="OrthoDB" id="9805706at2"/>
<dbReference type="Proteomes" id="UP000001981">
    <property type="component" value="Chromosome"/>
</dbReference>
<dbReference type="GO" id="GO:0005737">
    <property type="term" value="C:cytoplasm"/>
    <property type="evidence" value="ECO:0007669"/>
    <property type="project" value="UniProtKB-ARBA"/>
</dbReference>
<dbReference type="GO" id="GO:0000428">
    <property type="term" value="C:DNA-directed RNA polymerase complex"/>
    <property type="evidence" value="ECO:0007669"/>
    <property type="project" value="UniProtKB-KW"/>
</dbReference>
<dbReference type="GO" id="GO:0003677">
    <property type="term" value="F:DNA binding"/>
    <property type="evidence" value="ECO:0007669"/>
    <property type="project" value="UniProtKB-UniRule"/>
</dbReference>
<dbReference type="GO" id="GO:0003899">
    <property type="term" value="F:DNA-directed RNA polymerase activity"/>
    <property type="evidence" value="ECO:0007669"/>
    <property type="project" value="UniProtKB-UniRule"/>
</dbReference>
<dbReference type="GO" id="GO:0046983">
    <property type="term" value="F:protein dimerization activity"/>
    <property type="evidence" value="ECO:0007669"/>
    <property type="project" value="InterPro"/>
</dbReference>
<dbReference type="GO" id="GO:0006351">
    <property type="term" value="P:DNA-templated transcription"/>
    <property type="evidence" value="ECO:0007669"/>
    <property type="project" value="UniProtKB-UniRule"/>
</dbReference>
<dbReference type="CDD" id="cd06928">
    <property type="entry name" value="RNAP_alpha_NTD"/>
    <property type="match status" value="1"/>
</dbReference>
<dbReference type="FunFam" id="1.10.150.20:FF:000001">
    <property type="entry name" value="DNA-directed RNA polymerase subunit alpha"/>
    <property type="match status" value="1"/>
</dbReference>
<dbReference type="FunFam" id="2.170.120.12:FF:000001">
    <property type="entry name" value="DNA-directed RNA polymerase subunit alpha"/>
    <property type="match status" value="1"/>
</dbReference>
<dbReference type="Gene3D" id="1.10.150.20">
    <property type="entry name" value="5' to 3' exonuclease, C-terminal subdomain"/>
    <property type="match status" value="1"/>
</dbReference>
<dbReference type="Gene3D" id="2.170.120.12">
    <property type="entry name" value="DNA-directed RNA polymerase, insert domain"/>
    <property type="match status" value="1"/>
</dbReference>
<dbReference type="Gene3D" id="3.30.1360.10">
    <property type="entry name" value="RNA polymerase, RBP11-like subunit"/>
    <property type="match status" value="1"/>
</dbReference>
<dbReference type="HAMAP" id="MF_00059">
    <property type="entry name" value="RNApol_bact_RpoA"/>
    <property type="match status" value="1"/>
</dbReference>
<dbReference type="InterPro" id="IPR011262">
    <property type="entry name" value="DNA-dir_RNA_pol_insert"/>
</dbReference>
<dbReference type="InterPro" id="IPR011263">
    <property type="entry name" value="DNA-dir_RNA_pol_RpoA/D/Rpb3"/>
</dbReference>
<dbReference type="InterPro" id="IPR011773">
    <property type="entry name" value="DNA-dir_RpoA"/>
</dbReference>
<dbReference type="InterPro" id="IPR036603">
    <property type="entry name" value="RBP11-like"/>
</dbReference>
<dbReference type="InterPro" id="IPR011260">
    <property type="entry name" value="RNAP_asu_C"/>
</dbReference>
<dbReference type="InterPro" id="IPR036643">
    <property type="entry name" value="RNApol_insert_sf"/>
</dbReference>
<dbReference type="NCBIfam" id="NF003513">
    <property type="entry name" value="PRK05182.1-2"/>
    <property type="match status" value="1"/>
</dbReference>
<dbReference type="NCBIfam" id="NF003519">
    <property type="entry name" value="PRK05182.2-5"/>
    <property type="match status" value="1"/>
</dbReference>
<dbReference type="NCBIfam" id="TIGR02027">
    <property type="entry name" value="rpoA"/>
    <property type="match status" value="1"/>
</dbReference>
<dbReference type="Pfam" id="PF01000">
    <property type="entry name" value="RNA_pol_A_bac"/>
    <property type="match status" value="1"/>
</dbReference>
<dbReference type="Pfam" id="PF03118">
    <property type="entry name" value="RNA_pol_A_CTD"/>
    <property type="match status" value="1"/>
</dbReference>
<dbReference type="Pfam" id="PF01193">
    <property type="entry name" value="RNA_pol_L"/>
    <property type="match status" value="1"/>
</dbReference>
<dbReference type="SMART" id="SM00662">
    <property type="entry name" value="RPOLD"/>
    <property type="match status" value="1"/>
</dbReference>
<dbReference type="SUPFAM" id="SSF47789">
    <property type="entry name" value="C-terminal domain of RNA polymerase alpha subunit"/>
    <property type="match status" value="1"/>
</dbReference>
<dbReference type="SUPFAM" id="SSF56553">
    <property type="entry name" value="Insert subdomain of RNA polymerase alpha subunit"/>
    <property type="match status" value="1"/>
</dbReference>
<dbReference type="SUPFAM" id="SSF55257">
    <property type="entry name" value="RBP11-like subunits of RNA polymerase"/>
    <property type="match status" value="1"/>
</dbReference>
<feature type="chain" id="PRO_0000264527" description="DNA-directed RNA polymerase subunit alpha">
    <location>
        <begin position="1"/>
        <end position="329"/>
    </location>
</feature>
<feature type="region of interest" description="Alpha N-terminal domain (alpha-NTD)" evidence="1">
    <location>
        <begin position="1"/>
        <end position="234"/>
    </location>
</feature>
<feature type="region of interest" description="Alpha C-terminal domain (alpha-CTD)" evidence="1">
    <location>
        <begin position="248"/>
        <end position="329"/>
    </location>
</feature>
<reference key="1">
    <citation type="submission" date="2006-06" db="EMBL/GenBank/DDBJ databases">
        <title>Complete sequence of Pseudoalteromonas atlantica T6c.</title>
        <authorList>
            <consortium name="US DOE Joint Genome Institute"/>
            <person name="Copeland A."/>
            <person name="Lucas S."/>
            <person name="Lapidus A."/>
            <person name="Barry K."/>
            <person name="Detter J.C."/>
            <person name="Glavina del Rio T."/>
            <person name="Hammon N."/>
            <person name="Israni S."/>
            <person name="Dalin E."/>
            <person name="Tice H."/>
            <person name="Pitluck S."/>
            <person name="Saunders E."/>
            <person name="Brettin T."/>
            <person name="Bruce D."/>
            <person name="Han C."/>
            <person name="Tapia R."/>
            <person name="Gilna P."/>
            <person name="Schmutz J."/>
            <person name="Larimer F."/>
            <person name="Land M."/>
            <person name="Hauser L."/>
            <person name="Kyrpides N."/>
            <person name="Kim E."/>
            <person name="Karls A.C."/>
            <person name="Bartlett D."/>
            <person name="Higgins B.P."/>
            <person name="Richardson P."/>
        </authorList>
    </citation>
    <scope>NUCLEOTIDE SEQUENCE [LARGE SCALE GENOMIC DNA]</scope>
    <source>
        <strain>T6c / ATCC BAA-1087</strain>
    </source>
</reference>
<comment type="function">
    <text evidence="1">DNA-dependent RNA polymerase catalyzes the transcription of DNA into RNA using the four ribonucleoside triphosphates as substrates.</text>
</comment>
<comment type="catalytic activity">
    <reaction evidence="1">
        <text>RNA(n) + a ribonucleoside 5'-triphosphate = RNA(n+1) + diphosphate</text>
        <dbReference type="Rhea" id="RHEA:21248"/>
        <dbReference type="Rhea" id="RHEA-COMP:14527"/>
        <dbReference type="Rhea" id="RHEA-COMP:17342"/>
        <dbReference type="ChEBI" id="CHEBI:33019"/>
        <dbReference type="ChEBI" id="CHEBI:61557"/>
        <dbReference type="ChEBI" id="CHEBI:140395"/>
        <dbReference type="EC" id="2.7.7.6"/>
    </reaction>
</comment>
<comment type="subunit">
    <text evidence="1">Homodimer. The RNAP catalytic core consists of 2 alpha, 1 beta, 1 beta' and 1 omega subunit. When a sigma factor is associated with the core the holoenzyme is formed, which can initiate transcription.</text>
</comment>
<comment type="domain">
    <text evidence="1">The N-terminal domain is essential for RNAP assembly and basal transcription, whereas the C-terminal domain is involved in interaction with transcriptional regulators and with upstream promoter elements.</text>
</comment>
<comment type="similarity">
    <text evidence="1">Belongs to the RNA polymerase alpha chain family.</text>
</comment>
<name>RPOA_PSEA6</name>
<accession>Q15X48</accession>
<protein>
    <recommendedName>
        <fullName evidence="1">DNA-directed RNA polymerase subunit alpha</fullName>
        <shortName evidence="1">RNAP subunit alpha</shortName>
        <ecNumber evidence="1">2.7.7.6</ecNumber>
    </recommendedName>
    <alternativeName>
        <fullName evidence="1">RNA polymerase subunit alpha</fullName>
    </alternativeName>
    <alternativeName>
        <fullName evidence="1">Transcriptase subunit alpha</fullName>
    </alternativeName>
</protein>
<sequence length="329" mass="36249">MSGSVTEFLKPRLVEIDNVSPTRAKVTLEPLERGFGHTLGNALRRILLSSMPGCAVTEVEIDGVLHEYSTKEGVQEDVIEILLNLKGLAVRLEGKTEATLTLVKSGAGPVLAGDIQHDGDVEIVNPSHVLCTLTGEAELSMRIKVEMGRGYVPASTRRSSEEDDRPIGRLLVDASFSPVSRISYNVESARVEQRTDLDKLIIDMETNGTIDPEEAIRRSATILAEQLDAFVELRDMSEPVEKEEKPEFDPILLRPVDDLELTVRSANCLKAEAIQYIGDLVQRTEVELLKTPNLGKKSLTEIKDVLASRGLSLGMRLENWPPESIAEKD</sequence>
<gene>
    <name evidence="1" type="primary">rpoA</name>
    <name type="ordered locus">Patl_1014</name>
</gene>
<organism>
    <name type="scientific">Pseudoalteromonas atlantica (strain T6c / ATCC BAA-1087)</name>
    <dbReference type="NCBI Taxonomy" id="3042615"/>
    <lineage>
        <taxon>Bacteria</taxon>
        <taxon>Pseudomonadati</taxon>
        <taxon>Pseudomonadota</taxon>
        <taxon>Gammaproteobacteria</taxon>
        <taxon>Alteromonadales</taxon>
        <taxon>Alteromonadaceae</taxon>
        <taxon>Paraglaciecola</taxon>
    </lineage>
</organism>
<proteinExistence type="inferred from homology"/>
<keyword id="KW-0240">DNA-directed RNA polymerase</keyword>
<keyword id="KW-0548">Nucleotidyltransferase</keyword>
<keyword id="KW-0804">Transcription</keyword>
<keyword id="KW-0808">Transferase</keyword>
<evidence type="ECO:0000255" key="1">
    <source>
        <dbReference type="HAMAP-Rule" id="MF_00059"/>
    </source>
</evidence>